<proteinExistence type="inferred from homology"/>
<sequence length="178" mass="19476">MAETRTIARPYAEAVFKLAKNQNDLARWADTLQLAAAVAADENVRSLIGNPKISSRKLGELFLSVCGNRLNEEGRNFILLLAENGRLEILPEVNELYEQLKTRHEGVLDAKVISAFAMSDAQLKDLVTDLEAKFKRKIEAKVSVDADLIGGVIVEIGDEVLDASVRGKLEAMAVALKS</sequence>
<comment type="function">
    <text evidence="1">F(1)F(0) ATP synthase produces ATP from ADP in the presence of a proton or sodium gradient. F-type ATPases consist of two structural domains, F(1) containing the extramembraneous catalytic core and F(0) containing the membrane proton channel, linked together by a central stalk and a peripheral stalk. During catalysis, ATP synthesis in the catalytic domain of F(1) is coupled via a rotary mechanism of the central stalk subunits to proton translocation.</text>
</comment>
<comment type="function">
    <text evidence="1">This protein is part of the stalk that links CF(0) to CF(1). It either transmits conformational changes from CF(0) to CF(1) or is implicated in proton conduction.</text>
</comment>
<comment type="subunit">
    <text evidence="1">F-type ATPases have 2 components, F(1) - the catalytic core - and F(0) - the membrane proton channel. F(1) has five subunits: alpha(3), beta(3), gamma(1), delta(1), epsilon(1). F(0) has three main subunits: a(1), b(2) and c(10-14). The alpha and beta chains form an alternating ring which encloses part of the gamma chain. F(1) is attached to F(0) by a central stalk formed by the gamma and epsilon chains, while a peripheral stalk is formed by the delta and b chains.</text>
</comment>
<comment type="subcellular location">
    <subcellularLocation>
        <location evidence="1">Cell inner membrane</location>
        <topology evidence="1">Peripheral membrane protein</topology>
    </subcellularLocation>
</comment>
<comment type="similarity">
    <text evidence="1">Belongs to the ATPase delta chain family.</text>
</comment>
<accession>Q2YCA6</accession>
<gene>
    <name evidence="1" type="primary">atpH</name>
    <name type="ordered locus">Nmul_A0307</name>
</gene>
<reference key="1">
    <citation type="submission" date="2005-08" db="EMBL/GenBank/DDBJ databases">
        <title>Complete sequence of chromosome 1 of Nitrosospira multiformis ATCC 25196.</title>
        <authorList>
            <person name="Copeland A."/>
            <person name="Lucas S."/>
            <person name="Lapidus A."/>
            <person name="Barry K."/>
            <person name="Detter J.C."/>
            <person name="Glavina T."/>
            <person name="Hammon N."/>
            <person name="Israni S."/>
            <person name="Pitluck S."/>
            <person name="Chain P."/>
            <person name="Malfatti S."/>
            <person name="Shin M."/>
            <person name="Vergez L."/>
            <person name="Schmutz J."/>
            <person name="Larimer F."/>
            <person name="Land M."/>
            <person name="Hauser L."/>
            <person name="Kyrpides N."/>
            <person name="Lykidis A."/>
            <person name="Richardson P."/>
        </authorList>
    </citation>
    <scope>NUCLEOTIDE SEQUENCE [LARGE SCALE GENOMIC DNA]</scope>
    <source>
        <strain>ATCC 25196 / NCIMB 11849 / C 71</strain>
    </source>
</reference>
<organism>
    <name type="scientific">Nitrosospira multiformis (strain ATCC 25196 / NCIMB 11849 / C 71)</name>
    <dbReference type="NCBI Taxonomy" id="323848"/>
    <lineage>
        <taxon>Bacteria</taxon>
        <taxon>Pseudomonadati</taxon>
        <taxon>Pseudomonadota</taxon>
        <taxon>Betaproteobacteria</taxon>
        <taxon>Nitrosomonadales</taxon>
        <taxon>Nitrosomonadaceae</taxon>
        <taxon>Nitrosospira</taxon>
    </lineage>
</organism>
<protein>
    <recommendedName>
        <fullName evidence="1">ATP synthase subunit delta</fullName>
    </recommendedName>
    <alternativeName>
        <fullName evidence="1">ATP synthase F(1) sector subunit delta</fullName>
    </alternativeName>
    <alternativeName>
        <fullName evidence="1">F-type ATPase subunit delta</fullName>
        <shortName evidence="1">F-ATPase subunit delta</shortName>
    </alternativeName>
</protein>
<evidence type="ECO:0000255" key="1">
    <source>
        <dbReference type="HAMAP-Rule" id="MF_01416"/>
    </source>
</evidence>
<keyword id="KW-0066">ATP synthesis</keyword>
<keyword id="KW-0997">Cell inner membrane</keyword>
<keyword id="KW-1003">Cell membrane</keyword>
<keyword id="KW-0139">CF(1)</keyword>
<keyword id="KW-0375">Hydrogen ion transport</keyword>
<keyword id="KW-0406">Ion transport</keyword>
<keyword id="KW-0472">Membrane</keyword>
<keyword id="KW-1185">Reference proteome</keyword>
<keyword id="KW-0813">Transport</keyword>
<dbReference type="EMBL" id="CP000103">
    <property type="protein sequence ID" value="ABB73615.1"/>
    <property type="molecule type" value="Genomic_DNA"/>
</dbReference>
<dbReference type="RefSeq" id="WP_011379669.1">
    <property type="nucleotide sequence ID" value="NC_007614.1"/>
</dbReference>
<dbReference type="SMR" id="Q2YCA6"/>
<dbReference type="STRING" id="323848.Nmul_A0307"/>
<dbReference type="KEGG" id="nmu:Nmul_A0307"/>
<dbReference type="eggNOG" id="COG0712">
    <property type="taxonomic scope" value="Bacteria"/>
</dbReference>
<dbReference type="HOGENOM" id="CLU_085114_3_0_4"/>
<dbReference type="OrthoDB" id="9816221at2"/>
<dbReference type="Proteomes" id="UP000002718">
    <property type="component" value="Chromosome"/>
</dbReference>
<dbReference type="GO" id="GO:0005886">
    <property type="term" value="C:plasma membrane"/>
    <property type="evidence" value="ECO:0007669"/>
    <property type="project" value="UniProtKB-SubCell"/>
</dbReference>
<dbReference type="GO" id="GO:0045259">
    <property type="term" value="C:proton-transporting ATP synthase complex"/>
    <property type="evidence" value="ECO:0007669"/>
    <property type="project" value="UniProtKB-KW"/>
</dbReference>
<dbReference type="GO" id="GO:0046933">
    <property type="term" value="F:proton-transporting ATP synthase activity, rotational mechanism"/>
    <property type="evidence" value="ECO:0007669"/>
    <property type="project" value="UniProtKB-UniRule"/>
</dbReference>
<dbReference type="Gene3D" id="1.10.520.20">
    <property type="entry name" value="N-terminal domain of the delta subunit of the F1F0-ATP synthase"/>
    <property type="match status" value="1"/>
</dbReference>
<dbReference type="HAMAP" id="MF_01416">
    <property type="entry name" value="ATP_synth_delta_bact"/>
    <property type="match status" value="1"/>
</dbReference>
<dbReference type="InterPro" id="IPR026015">
    <property type="entry name" value="ATP_synth_OSCP/delta_N_sf"/>
</dbReference>
<dbReference type="InterPro" id="IPR000711">
    <property type="entry name" value="ATPase_OSCP/dsu"/>
</dbReference>
<dbReference type="NCBIfam" id="TIGR01145">
    <property type="entry name" value="ATP_synt_delta"/>
    <property type="match status" value="1"/>
</dbReference>
<dbReference type="NCBIfam" id="NF004402">
    <property type="entry name" value="PRK05758.2-2"/>
    <property type="match status" value="1"/>
</dbReference>
<dbReference type="PANTHER" id="PTHR11910">
    <property type="entry name" value="ATP SYNTHASE DELTA CHAIN"/>
    <property type="match status" value="1"/>
</dbReference>
<dbReference type="Pfam" id="PF00213">
    <property type="entry name" value="OSCP"/>
    <property type="match status" value="1"/>
</dbReference>
<dbReference type="PRINTS" id="PR00125">
    <property type="entry name" value="ATPASEDELTA"/>
</dbReference>
<dbReference type="SUPFAM" id="SSF47928">
    <property type="entry name" value="N-terminal domain of the delta subunit of the F1F0-ATP synthase"/>
    <property type="match status" value="1"/>
</dbReference>
<name>ATPD_NITMU</name>
<feature type="chain" id="PRO_0000371041" description="ATP synthase subunit delta">
    <location>
        <begin position="1"/>
        <end position="178"/>
    </location>
</feature>